<accession>A5CZ07</accession>
<name>MOAC_PELTS</name>
<evidence type="ECO:0000255" key="1">
    <source>
        <dbReference type="HAMAP-Rule" id="MF_01224"/>
    </source>
</evidence>
<reference key="1">
    <citation type="journal article" date="2008" name="Genome Res.">
        <title>The genome of Pelotomaculum thermopropionicum reveals niche-associated evolution in anaerobic microbiota.</title>
        <authorList>
            <person name="Kosaka T."/>
            <person name="Kato S."/>
            <person name="Shimoyama T."/>
            <person name="Ishii S."/>
            <person name="Abe T."/>
            <person name="Watanabe K."/>
        </authorList>
    </citation>
    <scope>NUCLEOTIDE SEQUENCE [LARGE SCALE GENOMIC DNA]</scope>
    <source>
        <strain>DSM 13744 / JCM 10971 / SI</strain>
    </source>
</reference>
<proteinExistence type="inferred from homology"/>
<comment type="function">
    <text evidence="1">Catalyzes the conversion of (8S)-3',8-cyclo-7,8-dihydroguanosine 5'-triphosphate to cyclic pyranopterin monophosphate (cPMP).</text>
</comment>
<comment type="catalytic activity">
    <reaction evidence="1">
        <text>(8S)-3',8-cyclo-7,8-dihydroguanosine 5'-triphosphate = cyclic pyranopterin phosphate + diphosphate</text>
        <dbReference type="Rhea" id="RHEA:49580"/>
        <dbReference type="ChEBI" id="CHEBI:33019"/>
        <dbReference type="ChEBI" id="CHEBI:59648"/>
        <dbReference type="ChEBI" id="CHEBI:131766"/>
        <dbReference type="EC" id="4.6.1.17"/>
    </reaction>
</comment>
<comment type="pathway">
    <text evidence="1">Cofactor biosynthesis; molybdopterin biosynthesis.</text>
</comment>
<comment type="subunit">
    <text evidence="1">Homohexamer; trimer of dimers.</text>
</comment>
<comment type="similarity">
    <text evidence="1">Belongs to the MoaC family.</text>
</comment>
<keyword id="KW-0456">Lyase</keyword>
<keyword id="KW-0501">Molybdenum cofactor biosynthesis</keyword>
<keyword id="KW-1185">Reference proteome</keyword>
<protein>
    <recommendedName>
        <fullName evidence="1">Cyclic pyranopterin monophosphate synthase</fullName>
        <ecNumber evidence="1">4.6.1.17</ecNumber>
    </recommendedName>
    <alternativeName>
        <fullName evidence="1">Molybdenum cofactor biosynthesis protein C</fullName>
    </alternativeName>
</protein>
<gene>
    <name evidence="1" type="primary">moaC</name>
    <name type="ordered locus">PTH_2609</name>
</gene>
<sequence length="170" mass="18428">MSGLTHLDERGQARMVEVGGKEATRREAVARGEVSMRPETLELILGGKVPKGEVFGVARVAGIMAAKKTPELIPLCHPLMLTGIDVQFRPDPERSRVEIEARVRTTGQTGVEMEALTAVTVAALAIYDMCKAVDREMVIGAVRLVHKSGGKSGVFERKGEEAWTEMQGTE</sequence>
<feature type="chain" id="PRO_1000085679" description="Cyclic pyranopterin monophosphate synthase">
    <location>
        <begin position="1"/>
        <end position="170"/>
    </location>
</feature>
<feature type="active site" evidence="1">
    <location>
        <position position="128"/>
    </location>
</feature>
<feature type="binding site" evidence="1">
    <location>
        <begin position="75"/>
        <end position="77"/>
    </location>
    <ligand>
        <name>substrate</name>
    </ligand>
</feature>
<feature type="binding site" evidence="1">
    <location>
        <begin position="113"/>
        <end position="114"/>
    </location>
    <ligand>
        <name>substrate</name>
    </ligand>
</feature>
<dbReference type="EC" id="4.6.1.17" evidence="1"/>
<dbReference type="EMBL" id="AP009389">
    <property type="protein sequence ID" value="BAF60790.1"/>
    <property type="molecule type" value="Genomic_DNA"/>
</dbReference>
<dbReference type="SMR" id="A5CZ07"/>
<dbReference type="STRING" id="370438.PTH_2609"/>
<dbReference type="KEGG" id="pth:PTH_2609"/>
<dbReference type="eggNOG" id="COG0315">
    <property type="taxonomic scope" value="Bacteria"/>
</dbReference>
<dbReference type="HOGENOM" id="CLU_074693_1_0_9"/>
<dbReference type="UniPathway" id="UPA00344"/>
<dbReference type="Proteomes" id="UP000006556">
    <property type="component" value="Chromosome"/>
</dbReference>
<dbReference type="GO" id="GO:0061799">
    <property type="term" value="F:cyclic pyranopterin monophosphate synthase activity"/>
    <property type="evidence" value="ECO:0007669"/>
    <property type="project" value="UniProtKB-UniRule"/>
</dbReference>
<dbReference type="GO" id="GO:0006777">
    <property type="term" value="P:Mo-molybdopterin cofactor biosynthetic process"/>
    <property type="evidence" value="ECO:0007669"/>
    <property type="project" value="UniProtKB-UniRule"/>
</dbReference>
<dbReference type="CDD" id="cd01420">
    <property type="entry name" value="MoaC_PE"/>
    <property type="match status" value="1"/>
</dbReference>
<dbReference type="FunFam" id="3.30.70.640:FF:000001">
    <property type="entry name" value="Cyclic pyranopterin monophosphate synthase"/>
    <property type="match status" value="1"/>
</dbReference>
<dbReference type="Gene3D" id="3.30.70.640">
    <property type="entry name" value="Molybdopterin cofactor biosynthesis C (MoaC) domain"/>
    <property type="match status" value="1"/>
</dbReference>
<dbReference type="HAMAP" id="MF_01224_B">
    <property type="entry name" value="MoaC_B"/>
    <property type="match status" value="1"/>
</dbReference>
<dbReference type="InterPro" id="IPR023045">
    <property type="entry name" value="MoaC"/>
</dbReference>
<dbReference type="InterPro" id="IPR047594">
    <property type="entry name" value="MoaC_bact/euk"/>
</dbReference>
<dbReference type="InterPro" id="IPR036522">
    <property type="entry name" value="MoaC_sf"/>
</dbReference>
<dbReference type="InterPro" id="IPR050105">
    <property type="entry name" value="MoCo_biosynth_MoaA/MoaC"/>
</dbReference>
<dbReference type="InterPro" id="IPR002820">
    <property type="entry name" value="Mopterin_CF_biosynth-C_dom"/>
</dbReference>
<dbReference type="NCBIfam" id="TIGR00581">
    <property type="entry name" value="moaC"/>
    <property type="match status" value="1"/>
</dbReference>
<dbReference type="NCBIfam" id="NF006870">
    <property type="entry name" value="PRK09364.1"/>
    <property type="match status" value="1"/>
</dbReference>
<dbReference type="PANTHER" id="PTHR22960:SF29">
    <property type="entry name" value="CYCLIC PYRANOPTERIN MONOPHOSPHATE SYNTHASE"/>
    <property type="match status" value="1"/>
</dbReference>
<dbReference type="PANTHER" id="PTHR22960">
    <property type="entry name" value="MOLYBDOPTERIN COFACTOR SYNTHESIS PROTEIN A"/>
    <property type="match status" value="1"/>
</dbReference>
<dbReference type="Pfam" id="PF01967">
    <property type="entry name" value="MoaC"/>
    <property type="match status" value="1"/>
</dbReference>
<dbReference type="SUPFAM" id="SSF55040">
    <property type="entry name" value="Molybdenum cofactor biosynthesis protein C, MoaC"/>
    <property type="match status" value="1"/>
</dbReference>
<organism>
    <name type="scientific">Pelotomaculum thermopropionicum (strain DSM 13744 / JCM 10971 / SI)</name>
    <dbReference type="NCBI Taxonomy" id="370438"/>
    <lineage>
        <taxon>Bacteria</taxon>
        <taxon>Bacillati</taxon>
        <taxon>Bacillota</taxon>
        <taxon>Clostridia</taxon>
        <taxon>Eubacteriales</taxon>
        <taxon>Desulfotomaculaceae</taxon>
        <taxon>Pelotomaculum</taxon>
    </lineage>
</organism>